<comment type="function">
    <text evidence="1">Palmitoyltransferase specific for casein kinase 1.</text>
</comment>
<comment type="catalytic activity">
    <reaction>
        <text>L-cysteinyl-[protein] + hexadecanoyl-CoA = S-hexadecanoyl-L-cysteinyl-[protein] + CoA</text>
        <dbReference type="Rhea" id="RHEA:36683"/>
        <dbReference type="Rhea" id="RHEA-COMP:10131"/>
        <dbReference type="Rhea" id="RHEA-COMP:11032"/>
        <dbReference type="ChEBI" id="CHEBI:29950"/>
        <dbReference type="ChEBI" id="CHEBI:57287"/>
        <dbReference type="ChEBI" id="CHEBI:57379"/>
        <dbReference type="ChEBI" id="CHEBI:74151"/>
        <dbReference type="EC" id="2.3.1.225"/>
    </reaction>
</comment>
<comment type="subcellular location">
    <subcellularLocation>
        <location>Early endosome membrane</location>
        <topology>Multi-pass membrane protein</topology>
    </subcellularLocation>
    <subcellularLocation>
        <location evidence="1">Golgi apparatus membrane</location>
        <topology evidence="1">Multi-pass membrane protein</topology>
    </subcellularLocation>
</comment>
<comment type="domain">
    <text evidence="1">The DHHC domain is required for palmitoyltransferase activity.</text>
</comment>
<comment type="similarity">
    <text evidence="5">Belongs to the DHHC palmitoyltransferase family. AKR/ZDHHC17 subfamily.</text>
</comment>
<keyword id="KW-0012">Acyltransferase</keyword>
<keyword id="KW-0040">ANK repeat</keyword>
<keyword id="KW-0967">Endosome</keyword>
<keyword id="KW-0333">Golgi apparatus</keyword>
<keyword id="KW-0449">Lipoprotein</keyword>
<keyword id="KW-0472">Membrane</keyword>
<keyword id="KW-0564">Palmitate</keyword>
<keyword id="KW-1185">Reference proteome</keyword>
<keyword id="KW-0677">Repeat</keyword>
<keyword id="KW-0808">Transferase</keyword>
<keyword id="KW-0812">Transmembrane</keyword>
<keyword id="KW-1133">Transmembrane helix</keyword>
<gene>
    <name type="primary">AKR1</name>
    <name type="ordered locus">CAGL0M08712g</name>
</gene>
<sequence>MEDNSEQASVSSQASMRPLVSDNGDREAGAGVEVNIANDNDTSVGVDGENGNEDDDPILSKYHNACQRGDLEVVREMIHGGQVNVSSDADREGVTGLHWAAINNRLNVVDFLVREGANVESKAGALEATPLHWAARYGFVYVVDYLLQHGASATTTDKQGFNLLHLSVNSSNIMLVVYVLFFVVSKGIIDIDYVDPKGRTALLWAAYQGDSLTVAALIKFNASVKIADEGGFTPLHWGTVKGQPHVLKYLIQDGADFFQKTNDNKDCFVIAEEMSNTHSFQEALRHNNFDKNGYPINKLVKRDDHAKIITFLIPLLVLGFAFFGFSHLHILFALPVIILLLLASNKFIKSFLLPSYETKGTNSASLLKSPLIAGILFGSIFWLAFVWILRILPYTFTKRPLGNLTFCAILCFVCYSLFLLAFSDPGHIGSENDHEKIRETISNLLKEGKFDTRSFCLETWVRKPLRSKYSYLNDALILRFDHYCPWIYNDVGLKNHKLFIFFILALELGIFSFVKVCLKYFDELDMDGDCFILGDDDLCSGLIGDRFTFLIMTWACIQAVWIFSLVIVQLFQITKGLTNSELNALIREGRRVDIDSQTHNEFFNTVPEGFINNKDTEEEAAPPVRNNTNERISTTFSGNLPKPRTCMGMICAVTGLHQCVAIIKDTFGIARHGSSRSTNTRSLLSSISTDYGWRRNWCDFWLLSDTNTPLWKRIFFSPPSTKALLNGKEADYATLYEVPNKNHGSVSQLQELQDPLSEIDDMV</sequence>
<organism>
    <name type="scientific">Candida glabrata (strain ATCC 2001 / BCRC 20586 / JCM 3761 / NBRC 0622 / NRRL Y-65 / CBS 138)</name>
    <name type="common">Yeast</name>
    <name type="synonym">Nakaseomyces glabratus</name>
    <dbReference type="NCBI Taxonomy" id="284593"/>
    <lineage>
        <taxon>Eukaryota</taxon>
        <taxon>Fungi</taxon>
        <taxon>Dikarya</taxon>
        <taxon>Ascomycota</taxon>
        <taxon>Saccharomycotina</taxon>
        <taxon>Saccharomycetes</taxon>
        <taxon>Saccharomycetales</taxon>
        <taxon>Saccharomycetaceae</taxon>
        <taxon>Nakaseomyces</taxon>
    </lineage>
</organism>
<accession>Q6FJ70</accession>
<reference key="1">
    <citation type="journal article" date="2004" name="Nature">
        <title>Genome evolution in yeasts.</title>
        <authorList>
            <person name="Dujon B."/>
            <person name="Sherman D."/>
            <person name="Fischer G."/>
            <person name="Durrens P."/>
            <person name="Casaregola S."/>
            <person name="Lafontaine I."/>
            <person name="de Montigny J."/>
            <person name="Marck C."/>
            <person name="Neuveglise C."/>
            <person name="Talla E."/>
            <person name="Goffard N."/>
            <person name="Frangeul L."/>
            <person name="Aigle M."/>
            <person name="Anthouard V."/>
            <person name="Babour A."/>
            <person name="Barbe V."/>
            <person name="Barnay S."/>
            <person name="Blanchin S."/>
            <person name="Beckerich J.-M."/>
            <person name="Beyne E."/>
            <person name="Bleykasten C."/>
            <person name="Boisrame A."/>
            <person name="Boyer J."/>
            <person name="Cattolico L."/>
            <person name="Confanioleri F."/>
            <person name="de Daruvar A."/>
            <person name="Despons L."/>
            <person name="Fabre E."/>
            <person name="Fairhead C."/>
            <person name="Ferry-Dumazet H."/>
            <person name="Groppi A."/>
            <person name="Hantraye F."/>
            <person name="Hennequin C."/>
            <person name="Jauniaux N."/>
            <person name="Joyet P."/>
            <person name="Kachouri R."/>
            <person name="Kerrest A."/>
            <person name="Koszul R."/>
            <person name="Lemaire M."/>
            <person name="Lesur I."/>
            <person name="Ma L."/>
            <person name="Muller H."/>
            <person name="Nicaud J.-M."/>
            <person name="Nikolski M."/>
            <person name="Oztas S."/>
            <person name="Ozier-Kalogeropoulos O."/>
            <person name="Pellenz S."/>
            <person name="Potier S."/>
            <person name="Richard G.-F."/>
            <person name="Straub M.-L."/>
            <person name="Suleau A."/>
            <person name="Swennen D."/>
            <person name="Tekaia F."/>
            <person name="Wesolowski-Louvel M."/>
            <person name="Westhof E."/>
            <person name="Wirth B."/>
            <person name="Zeniou-Meyer M."/>
            <person name="Zivanovic Y."/>
            <person name="Bolotin-Fukuhara M."/>
            <person name="Thierry A."/>
            <person name="Bouchier C."/>
            <person name="Caudron B."/>
            <person name="Scarpelli C."/>
            <person name="Gaillardin C."/>
            <person name="Weissenbach J."/>
            <person name="Wincker P."/>
            <person name="Souciet J.-L."/>
        </authorList>
    </citation>
    <scope>NUCLEOTIDE SEQUENCE [LARGE SCALE GENOMIC DNA]</scope>
    <source>
        <strain>ATCC 2001 / BCRC 20586 / JCM 3761 / NBRC 0622 / NRRL Y-65 / CBS 138</strain>
    </source>
</reference>
<name>AKR1_CANGA</name>
<proteinExistence type="inferred from homology"/>
<protein>
    <recommendedName>
        <fullName>Palmitoyltransferase AKR1</fullName>
        <ecNumber>2.3.1.225</ecNumber>
    </recommendedName>
    <alternativeName>
        <fullName>Ankyrin repeat-containing protein AKR1</fullName>
    </alternativeName>
</protein>
<feature type="chain" id="PRO_0000212920" description="Palmitoyltransferase AKR1">
    <location>
        <begin position="1"/>
        <end position="763"/>
    </location>
</feature>
<feature type="topological domain" description="Cytoplasmic" evidence="2">
    <location>
        <begin position="1"/>
        <end position="307"/>
    </location>
</feature>
<feature type="transmembrane region" description="Helical" evidence="2">
    <location>
        <begin position="308"/>
        <end position="325"/>
    </location>
</feature>
<feature type="topological domain" description="Lumenal" evidence="2">
    <location>
        <begin position="326"/>
        <end position="330"/>
    </location>
</feature>
<feature type="transmembrane region" description="Helical" evidence="2">
    <location>
        <begin position="331"/>
        <end position="348"/>
    </location>
</feature>
<feature type="topological domain" description="Cytoplasmic" evidence="2">
    <location>
        <begin position="349"/>
        <end position="368"/>
    </location>
</feature>
<feature type="transmembrane region" description="Helical" evidence="2">
    <location>
        <begin position="369"/>
        <end position="389"/>
    </location>
</feature>
<feature type="topological domain" description="Lumenal" evidence="2">
    <location>
        <begin position="390"/>
        <end position="401"/>
    </location>
</feature>
<feature type="transmembrane region" description="Helical" evidence="2">
    <location>
        <begin position="402"/>
        <end position="422"/>
    </location>
</feature>
<feature type="topological domain" description="Cytoplasmic" evidence="2">
    <location>
        <begin position="423"/>
        <end position="497"/>
    </location>
</feature>
<feature type="transmembrane region" description="Helical" evidence="2">
    <location>
        <begin position="498"/>
        <end position="518"/>
    </location>
</feature>
<feature type="topological domain" description="Lumenal" evidence="2">
    <location>
        <begin position="519"/>
        <end position="546"/>
    </location>
</feature>
<feature type="transmembrane region" description="Helical" evidence="2">
    <location>
        <begin position="547"/>
        <end position="567"/>
    </location>
</feature>
<feature type="topological domain" description="Cytoplasmic" evidence="2">
    <location>
        <begin position="568"/>
        <end position="763"/>
    </location>
</feature>
<feature type="repeat" description="ANK 1">
    <location>
        <begin position="57"/>
        <end position="87"/>
    </location>
</feature>
<feature type="repeat" description="ANK 2">
    <location>
        <begin position="92"/>
        <end position="121"/>
    </location>
</feature>
<feature type="repeat" description="ANK 3">
    <location>
        <begin position="126"/>
        <end position="155"/>
    </location>
</feature>
<feature type="repeat" description="ANK 4">
    <location>
        <begin position="159"/>
        <end position="188"/>
    </location>
</feature>
<feature type="repeat" description="ANK 5">
    <location>
        <begin position="197"/>
        <end position="226"/>
    </location>
</feature>
<feature type="repeat" description="ANK 6">
    <location>
        <begin position="230"/>
        <end position="259"/>
    </location>
</feature>
<feature type="repeat" description="ANK 7">
    <location>
        <begin position="292"/>
        <end position="322"/>
    </location>
</feature>
<feature type="domain" description="DHHC" evidence="3">
    <location>
        <begin position="454"/>
        <end position="504"/>
    </location>
</feature>
<feature type="region of interest" description="Disordered" evidence="4">
    <location>
        <begin position="1"/>
        <end position="59"/>
    </location>
</feature>
<feature type="compositionally biased region" description="Polar residues" evidence="4">
    <location>
        <begin position="1"/>
        <end position="15"/>
    </location>
</feature>
<feature type="active site" description="S-palmitoyl cysteine intermediate" evidence="1">
    <location>
        <position position="484"/>
    </location>
</feature>
<evidence type="ECO:0000250" key="1"/>
<evidence type="ECO:0000255" key="2"/>
<evidence type="ECO:0000255" key="3">
    <source>
        <dbReference type="PROSITE-ProRule" id="PRU00067"/>
    </source>
</evidence>
<evidence type="ECO:0000256" key="4">
    <source>
        <dbReference type="SAM" id="MobiDB-lite"/>
    </source>
</evidence>
<evidence type="ECO:0000305" key="5"/>
<dbReference type="EC" id="2.3.1.225"/>
<dbReference type="EMBL" id="CR380959">
    <property type="protein sequence ID" value="CAG62700.1"/>
    <property type="molecule type" value="Genomic_DNA"/>
</dbReference>
<dbReference type="RefSeq" id="XP_449724.1">
    <property type="nucleotide sequence ID" value="XM_449724.1"/>
</dbReference>
<dbReference type="SMR" id="Q6FJ70"/>
<dbReference type="FunCoup" id="Q6FJ70">
    <property type="interactions" value="625"/>
</dbReference>
<dbReference type="STRING" id="284593.Q6FJ70"/>
<dbReference type="EnsemblFungi" id="CAGL0M08712g-T">
    <property type="protein sequence ID" value="CAGL0M08712g-T-p1"/>
    <property type="gene ID" value="CAGL0M08712g"/>
</dbReference>
<dbReference type="KEGG" id="cgr:2891285"/>
<dbReference type="CGD" id="CAL0137231">
    <property type="gene designation" value="CAGL0M08712g"/>
</dbReference>
<dbReference type="VEuPathDB" id="FungiDB:B1J91_M08712g"/>
<dbReference type="VEuPathDB" id="FungiDB:CAGL0M08712g"/>
<dbReference type="eggNOG" id="KOG0509">
    <property type="taxonomic scope" value="Eukaryota"/>
</dbReference>
<dbReference type="HOGENOM" id="CLU_012510_1_1_1"/>
<dbReference type="InParanoid" id="Q6FJ70"/>
<dbReference type="OMA" id="RECQSHS"/>
<dbReference type="Proteomes" id="UP000002428">
    <property type="component" value="Chromosome M"/>
</dbReference>
<dbReference type="GO" id="GO:0031901">
    <property type="term" value="C:early endosome membrane"/>
    <property type="evidence" value="ECO:0007669"/>
    <property type="project" value="UniProtKB-SubCell"/>
</dbReference>
<dbReference type="GO" id="GO:0000139">
    <property type="term" value="C:Golgi membrane"/>
    <property type="evidence" value="ECO:0007669"/>
    <property type="project" value="UniProtKB-SubCell"/>
</dbReference>
<dbReference type="GO" id="GO:0031683">
    <property type="term" value="F:G-protein beta/gamma-subunit complex binding"/>
    <property type="evidence" value="ECO:0007669"/>
    <property type="project" value="EnsemblFungi"/>
</dbReference>
<dbReference type="GO" id="GO:0019706">
    <property type="term" value="F:protein-cysteine S-palmitoyltransferase activity"/>
    <property type="evidence" value="ECO:0007669"/>
    <property type="project" value="UniProtKB-EC"/>
</dbReference>
<dbReference type="GO" id="GO:0090029">
    <property type="term" value="P:negative regulation of pheromone-dependent signal transduction involved in conjugation with cellular fusion"/>
    <property type="evidence" value="ECO:0007669"/>
    <property type="project" value="EnsemblFungi"/>
</dbReference>
<dbReference type="GO" id="GO:0006612">
    <property type="term" value="P:protein targeting to membrane"/>
    <property type="evidence" value="ECO:0007669"/>
    <property type="project" value="EnsemblFungi"/>
</dbReference>
<dbReference type="GO" id="GO:0030100">
    <property type="term" value="P:regulation of endocytosis"/>
    <property type="evidence" value="ECO:0007669"/>
    <property type="project" value="EnsemblFungi"/>
</dbReference>
<dbReference type="FunFam" id="1.25.40.20:FF:000301">
    <property type="entry name" value="Palmitoyltransferase"/>
    <property type="match status" value="1"/>
</dbReference>
<dbReference type="Gene3D" id="1.25.40.20">
    <property type="entry name" value="Ankyrin repeat-containing domain"/>
    <property type="match status" value="2"/>
</dbReference>
<dbReference type="InterPro" id="IPR002110">
    <property type="entry name" value="Ankyrin_rpt"/>
</dbReference>
<dbReference type="InterPro" id="IPR036770">
    <property type="entry name" value="Ankyrin_rpt-contain_sf"/>
</dbReference>
<dbReference type="InterPro" id="IPR001594">
    <property type="entry name" value="Palmitoyltrfase_DHHC"/>
</dbReference>
<dbReference type="PANTHER" id="PTHR24161">
    <property type="entry name" value="ANK_REP_REGION DOMAIN-CONTAINING PROTEIN-RELATED"/>
    <property type="match status" value="1"/>
</dbReference>
<dbReference type="PANTHER" id="PTHR24161:SF85">
    <property type="entry name" value="PALMITOYLTRANSFERASE HIP14"/>
    <property type="match status" value="1"/>
</dbReference>
<dbReference type="Pfam" id="PF12796">
    <property type="entry name" value="Ank_2"/>
    <property type="match status" value="3"/>
</dbReference>
<dbReference type="Pfam" id="PF01529">
    <property type="entry name" value="DHHC"/>
    <property type="match status" value="1"/>
</dbReference>
<dbReference type="SMART" id="SM00248">
    <property type="entry name" value="ANK"/>
    <property type="match status" value="6"/>
</dbReference>
<dbReference type="SUPFAM" id="SSF48403">
    <property type="entry name" value="Ankyrin repeat"/>
    <property type="match status" value="1"/>
</dbReference>
<dbReference type="PROSITE" id="PS50297">
    <property type="entry name" value="ANK_REP_REGION"/>
    <property type="match status" value="1"/>
</dbReference>
<dbReference type="PROSITE" id="PS50088">
    <property type="entry name" value="ANK_REPEAT"/>
    <property type="match status" value="4"/>
</dbReference>
<dbReference type="PROSITE" id="PS50216">
    <property type="entry name" value="DHHC"/>
    <property type="match status" value="1"/>
</dbReference>